<proteinExistence type="inferred from homology"/>
<protein>
    <recommendedName>
        <fullName evidence="1">tRNA-2-methylthio-N(6)-dimethylallyladenosine synthase</fullName>
        <ecNumber evidence="1">2.8.4.3</ecNumber>
    </recommendedName>
    <alternativeName>
        <fullName evidence="1">(Dimethylallyl)adenosine tRNA methylthiotransferase MiaB</fullName>
    </alternativeName>
    <alternativeName>
        <fullName evidence="1">tRNA-i(6)A37 methylthiotransferase</fullName>
    </alternativeName>
</protein>
<comment type="function">
    <text evidence="1">Catalyzes the methylthiolation of N6-(dimethylallyl)adenosine (i(6)A), leading to the formation of 2-methylthio-N6-(dimethylallyl)adenosine (ms(2)i(6)A) at position 37 in tRNAs that read codons beginning with uridine.</text>
</comment>
<comment type="catalytic activity">
    <reaction evidence="1">
        <text>N(6)-dimethylallyladenosine(37) in tRNA + (sulfur carrier)-SH + AH2 + 2 S-adenosyl-L-methionine = 2-methylsulfanyl-N(6)-dimethylallyladenosine(37) in tRNA + (sulfur carrier)-H + 5'-deoxyadenosine + L-methionine + A + S-adenosyl-L-homocysteine + 2 H(+)</text>
        <dbReference type="Rhea" id="RHEA:37067"/>
        <dbReference type="Rhea" id="RHEA-COMP:10375"/>
        <dbReference type="Rhea" id="RHEA-COMP:10376"/>
        <dbReference type="Rhea" id="RHEA-COMP:14737"/>
        <dbReference type="Rhea" id="RHEA-COMP:14739"/>
        <dbReference type="ChEBI" id="CHEBI:13193"/>
        <dbReference type="ChEBI" id="CHEBI:15378"/>
        <dbReference type="ChEBI" id="CHEBI:17319"/>
        <dbReference type="ChEBI" id="CHEBI:17499"/>
        <dbReference type="ChEBI" id="CHEBI:29917"/>
        <dbReference type="ChEBI" id="CHEBI:57844"/>
        <dbReference type="ChEBI" id="CHEBI:57856"/>
        <dbReference type="ChEBI" id="CHEBI:59789"/>
        <dbReference type="ChEBI" id="CHEBI:64428"/>
        <dbReference type="ChEBI" id="CHEBI:74415"/>
        <dbReference type="ChEBI" id="CHEBI:74417"/>
        <dbReference type="EC" id="2.8.4.3"/>
    </reaction>
</comment>
<comment type="cofactor">
    <cofactor evidence="1">
        <name>[4Fe-4S] cluster</name>
        <dbReference type="ChEBI" id="CHEBI:49883"/>
    </cofactor>
    <text evidence="1">Binds 2 [4Fe-4S] clusters. One cluster is coordinated with 3 cysteines and an exchangeable S-adenosyl-L-methionine.</text>
</comment>
<comment type="subunit">
    <text evidence="1">Monomer.</text>
</comment>
<comment type="subcellular location">
    <subcellularLocation>
        <location evidence="1">Cytoplasm</location>
    </subcellularLocation>
</comment>
<comment type="similarity">
    <text evidence="1">Belongs to the methylthiotransferase family. MiaB subfamily.</text>
</comment>
<sequence length="467" mass="52337">MSDDTTQIEPAMAQETSPRANTRKVFVKTYGCQMNVYDSQRMADSLAAEGYVATDTPDDADLVLLNTCHIREKASEKLYSALGRLRKMRDARAADGKELTIGVAGCVAQAEGQEILRRAPNVDLVIGPQTYHRLPNALARVRGGEKVVETDYAIEDKFEHLPAPRREETRKRGVSAFLTVQEGCDKFCTFCVVPYTRGSEVSRSVKQIVAEAERLADSGVRELTLLGQNVNAWHGEGEDGREWGLGELLFRLARIPGIARLRYTTSHPRDMDDSLIAAHRDLRQLMPYLHLPVQSGSDRILKAMNRRHKADEYLRLIERIRNVRPDMALSGDFIVGFPGETDQDFEDTMQLVRDVNYAQAYSFKYSPRPGTPGADLDDHVEEAVKDERLQRLQALLSAQQYAFQDSMIGRKMDVLLEKPGREAGQMVGRSPWLLPVIIDDNKDRVGDIIHVKIVSTGTNSLIAQKLA</sequence>
<evidence type="ECO:0000255" key="1">
    <source>
        <dbReference type="HAMAP-Rule" id="MF_01864"/>
    </source>
</evidence>
<evidence type="ECO:0000255" key="2">
    <source>
        <dbReference type="PROSITE-ProRule" id="PRU01266"/>
    </source>
</evidence>
<evidence type="ECO:0000256" key="3">
    <source>
        <dbReference type="SAM" id="MobiDB-lite"/>
    </source>
</evidence>
<gene>
    <name evidence="1" type="primary">miaB</name>
    <name type="ordered locus">BAB1_2154</name>
</gene>
<accession>Q2YQS8</accession>
<dbReference type="EC" id="2.8.4.3" evidence="1"/>
<dbReference type="EMBL" id="AM040264">
    <property type="protein sequence ID" value="CAJ12110.1"/>
    <property type="molecule type" value="Genomic_DNA"/>
</dbReference>
<dbReference type="RefSeq" id="WP_002965216.1">
    <property type="nucleotide sequence ID" value="NZ_KN046823.1"/>
</dbReference>
<dbReference type="SMR" id="Q2YQS8"/>
<dbReference type="STRING" id="359391.BAB1_2154"/>
<dbReference type="GeneID" id="93017544"/>
<dbReference type="KEGG" id="bmf:BAB1_2154"/>
<dbReference type="PATRIC" id="fig|359391.11.peg.1389"/>
<dbReference type="HOGENOM" id="CLU_018697_2_0_5"/>
<dbReference type="PhylomeDB" id="Q2YQS8"/>
<dbReference type="Proteomes" id="UP000002719">
    <property type="component" value="Chromosome I"/>
</dbReference>
<dbReference type="GO" id="GO:0005829">
    <property type="term" value="C:cytosol"/>
    <property type="evidence" value="ECO:0007669"/>
    <property type="project" value="TreeGrafter"/>
</dbReference>
<dbReference type="GO" id="GO:0051539">
    <property type="term" value="F:4 iron, 4 sulfur cluster binding"/>
    <property type="evidence" value="ECO:0007669"/>
    <property type="project" value="UniProtKB-UniRule"/>
</dbReference>
<dbReference type="GO" id="GO:0046872">
    <property type="term" value="F:metal ion binding"/>
    <property type="evidence" value="ECO:0007669"/>
    <property type="project" value="UniProtKB-KW"/>
</dbReference>
<dbReference type="GO" id="GO:0035597">
    <property type="term" value="F:N6-isopentenyladenosine methylthiotransferase activity"/>
    <property type="evidence" value="ECO:0007669"/>
    <property type="project" value="TreeGrafter"/>
</dbReference>
<dbReference type="CDD" id="cd01335">
    <property type="entry name" value="Radical_SAM"/>
    <property type="match status" value="1"/>
</dbReference>
<dbReference type="FunFam" id="3.40.50.12160:FF:000003">
    <property type="entry name" value="CDK5 regulatory subunit-associated protein 1"/>
    <property type="match status" value="1"/>
</dbReference>
<dbReference type="FunFam" id="3.80.30.20:FF:000001">
    <property type="entry name" value="tRNA-2-methylthio-N(6)-dimethylallyladenosine synthase 2"/>
    <property type="match status" value="1"/>
</dbReference>
<dbReference type="Gene3D" id="3.40.50.12160">
    <property type="entry name" value="Methylthiotransferase, N-terminal domain"/>
    <property type="match status" value="1"/>
</dbReference>
<dbReference type="Gene3D" id="3.80.30.20">
    <property type="entry name" value="tm_1862 like domain"/>
    <property type="match status" value="1"/>
</dbReference>
<dbReference type="HAMAP" id="MF_01864">
    <property type="entry name" value="tRNA_metthiotr_MiaB"/>
    <property type="match status" value="1"/>
</dbReference>
<dbReference type="InterPro" id="IPR006638">
    <property type="entry name" value="Elp3/MiaA/NifB-like_rSAM"/>
</dbReference>
<dbReference type="InterPro" id="IPR005839">
    <property type="entry name" value="Methylthiotransferase"/>
</dbReference>
<dbReference type="InterPro" id="IPR020612">
    <property type="entry name" value="Methylthiotransferase_CS"/>
</dbReference>
<dbReference type="InterPro" id="IPR013848">
    <property type="entry name" value="Methylthiotransferase_N"/>
</dbReference>
<dbReference type="InterPro" id="IPR038135">
    <property type="entry name" value="Methylthiotransferase_N_sf"/>
</dbReference>
<dbReference type="InterPro" id="IPR006463">
    <property type="entry name" value="MiaB_methiolase"/>
</dbReference>
<dbReference type="InterPro" id="IPR007197">
    <property type="entry name" value="rSAM"/>
</dbReference>
<dbReference type="InterPro" id="IPR023404">
    <property type="entry name" value="rSAM_horseshoe"/>
</dbReference>
<dbReference type="InterPro" id="IPR002792">
    <property type="entry name" value="TRAM_dom"/>
</dbReference>
<dbReference type="NCBIfam" id="TIGR01574">
    <property type="entry name" value="miaB-methiolase"/>
    <property type="match status" value="1"/>
</dbReference>
<dbReference type="NCBIfam" id="TIGR00089">
    <property type="entry name" value="MiaB/RimO family radical SAM methylthiotransferase"/>
    <property type="match status" value="1"/>
</dbReference>
<dbReference type="PANTHER" id="PTHR43020">
    <property type="entry name" value="CDK5 REGULATORY SUBUNIT-ASSOCIATED PROTEIN 1"/>
    <property type="match status" value="1"/>
</dbReference>
<dbReference type="PANTHER" id="PTHR43020:SF2">
    <property type="entry name" value="MITOCHONDRIAL TRNA METHYLTHIOTRANSFERASE CDK5RAP1"/>
    <property type="match status" value="1"/>
</dbReference>
<dbReference type="Pfam" id="PF04055">
    <property type="entry name" value="Radical_SAM"/>
    <property type="match status" value="1"/>
</dbReference>
<dbReference type="Pfam" id="PF01938">
    <property type="entry name" value="TRAM"/>
    <property type="match status" value="1"/>
</dbReference>
<dbReference type="Pfam" id="PF00919">
    <property type="entry name" value="UPF0004"/>
    <property type="match status" value="1"/>
</dbReference>
<dbReference type="SFLD" id="SFLDF00273">
    <property type="entry name" value="(dimethylallyl)adenosine_tRNA"/>
    <property type="match status" value="1"/>
</dbReference>
<dbReference type="SFLD" id="SFLDG01082">
    <property type="entry name" value="B12-binding_domain_containing"/>
    <property type="match status" value="1"/>
</dbReference>
<dbReference type="SFLD" id="SFLDS00029">
    <property type="entry name" value="Radical_SAM"/>
    <property type="match status" value="1"/>
</dbReference>
<dbReference type="SMART" id="SM00729">
    <property type="entry name" value="Elp3"/>
    <property type="match status" value="1"/>
</dbReference>
<dbReference type="SUPFAM" id="SSF102114">
    <property type="entry name" value="Radical SAM enzymes"/>
    <property type="match status" value="1"/>
</dbReference>
<dbReference type="PROSITE" id="PS51449">
    <property type="entry name" value="MTTASE_N"/>
    <property type="match status" value="1"/>
</dbReference>
<dbReference type="PROSITE" id="PS01278">
    <property type="entry name" value="MTTASE_RADICAL"/>
    <property type="match status" value="1"/>
</dbReference>
<dbReference type="PROSITE" id="PS51918">
    <property type="entry name" value="RADICAL_SAM"/>
    <property type="match status" value="1"/>
</dbReference>
<dbReference type="PROSITE" id="PS50926">
    <property type="entry name" value="TRAM"/>
    <property type="match status" value="1"/>
</dbReference>
<keyword id="KW-0004">4Fe-4S</keyword>
<keyword id="KW-0963">Cytoplasm</keyword>
<keyword id="KW-0408">Iron</keyword>
<keyword id="KW-0411">Iron-sulfur</keyword>
<keyword id="KW-0479">Metal-binding</keyword>
<keyword id="KW-1185">Reference proteome</keyword>
<keyword id="KW-0949">S-adenosyl-L-methionine</keyword>
<keyword id="KW-0808">Transferase</keyword>
<keyword id="KW-0819">tRNA processing</keyword>
<name>MIAB_BRUA2</name>
<feature type="chain" id="PRO_0000374164" description="tRNA-2-methylthio-N(6)-dimethylallyladenosine synthase">
    <location>
        <begin position="1"/>
        <end position="467"/>
    </location>
</feature>
<feature type="domain" description="MTTase N-terminal" evidence="1">
    <location>
        <begin position="23"/>
        <end position="143"/>
    </location>
</feature>
<feature type="domain" description="Radical SAM core" evidence="2">
    <location>
        <begin position="170"/>
        <end position="402"/>
    </location>
</feature>
<feature type="domain" description="TRAM" evidence="1">
    <location>
        <begin position="405"/>
        <end position="467"/>
    </location>
</feature>
<feature type="region of interest" description="Disordered" evidence="3">
    <location>
        <begin position="1"/>
        <end position="20"/>
    </location>
</feature>
<feature type="binding site" evidence="1">
    <location>
        <position position="32"/>
    </location>
    <ligand>
        <name>[4Fe-4S] cluster</name>
        <dbReference type="ChEBI" id="CHEBI:49883"/>
        <label>1</label>
    </ligand>
</feature>
<feature type="binding site" evidence="1">
    <location>
        <position position="68"/>
    </location>
    <ligand>
        <name>[4Fe-4S] cluster</name>
        <dbReference type="ChEBI" id="CHEBI:49883"/>
        <label>1</label>
    </ligand>
</feature>
<feature type="binding site" evidence="1">
    <location>
        <position position="106"/>
    </location>
    <ligand>
        <name>[4Fe-4S] cluster</name>
        <dbReference type="ChEBI" id="CHEBI:49883"/>
        <label>1</label>
    </ligand>
</feature>
<feature type="binding site" evidence="1">
    <location>
        <position position="184"/>
    </location>
    <ligand>
        <name>[4Fe-4S] cluster</name>
        <dbReference type="ChEBI" id="CHEBI:49883"/>
        <label>2</label>
        <note>4Fe-4S-S-AdoMet</note>
    </ligand>
</feature>
<feature type="binding site" evidence="1">
    <location>
        <position position="188"/>
    </location>
    <ligand>
        <name>[4Fe-4S] cluster</name>
        <dbReference type="ChEBI" id="CHEBI:49883"/>
        <label>2</label>
        <note>4Fe-4S-S-AdoMet</note>
    </ligand>
</feature>
<feature type="binding site" evidence="1">
    <location>
        <position position="191"/>
    </location>
    <ligand>
        <name>[4Fe-4S] cluster</name>
        <dbReference type="ChEBI" id="CHEBI:49883"/>
        <label>2</label>
        <note>4Fe-4S-S-AdoMet</note>
    </ligand>
</feature>
<reference key="1">
    <citation type="journal article" date="2005" name="Infect. Immun.">
        <title>Whole-genome analyses of speciation events in pathogenic Brucellae.</title>
        <authorList>
            <person name="Chain P.S."/>
            <person name="Comerci D.J."/>
            <person name="Tolmasky M.E."/>
            <person name="Larimer F.W."/>
            <person name="Malfatti S.A."/>
            <person name="Vergez L.M."/>
            <person name="Aguero F."/>
            <person name="Land M.L."/>
            <person name="Ugalde R.A."/>
            <person name="Garcia E."/>
        </authorList>
    </citation>
    <scope>NUCLEOTIDE SEQUENCE [LARGE SCALE GENOMIC DNA]</scope>
    <source>
        <strain>2308</strain>
    </source>
</reference>
<organism>
    <name type="scientific">Brucella abortus (strain 2308)</name>
    <dbReference type="NCBI Taxonomy" id="359391"/>
    <lineage>
        <taxon>Bacteria</taxon>
        <taxon>Pseudomonadati</taxon>
        <taxon>Pseudomonadota</taxon>
        <taxon>Alphaproteobacteria</taxon>
        <taxon>Hyphomicrobiales</taxon>
        <taxon>Brucellaceae</taxon>
        <taxon>Brucella/Ochrobactrum group</taxon>
        <taxon>Brucella</taxon>
    </lineage>
</organism>